<evidence type="ECO:0000255" key="1">
    <source>
        <dbReference type="HAMAP-Rule" id="MF_00091"/>
    </source>
</evidence>
<accession>Q04DQ5</accession>
<dbReference type="EC" id="4.4.1.21" evidence="1"/>
<dbReference type="EMBL" id="CP000411">
    <property type="protein sequence ID" value="ABJ57417.1"/>
    <property type="molecule type" value="Genomic_DNA"/>
</dbReference>
<dbReference type="RefSeq" id="WP_002817632.1">
    <property type="nucleotide sequence ID" value="NC_008528.1"/>
</dbReference>
<dbReference type="SMR" id="Q04DQ5"/>
<dbReference type="STRING" id="203123.OEOE_1562"/>
<dbReference type="KEGG" id="ooe:OEOE_1562"/>
<dbReference type="eggNOG" id="COG1854">
    <property type="taxonomic scope" value="Bacteria"/>
</dbReference>
<dbReference type="HOGENOM" id="CLU_107531_2_1_9"/>
<dbReference type="Proteomes" id="UP000000774">
    <property type="component" value="Chromosome"/>
</dbReference>
<dbReference type="GO" id="GO:0005506">
    <property type="term" value="F:iron ion binding"/>
    <property type="evidence" value="ECO:0007669"/>
    <property type="project" value="InterPro"/>
</dbReference>
<dbReference type="GO" id="GO:0043768">
    <property type="term" value="F:S-ribosylhomocysteine lyase activity"/>
    <property type="evidence" value="ECO:0007669"/>
    <property type="project" value="UniProtKB-UniRule"/>
</dbReference>
<dbReference type="GO" id="GO:0009372">
    <property type="term" value="P:quorum sensing"/>
    <property type="evidence" value="ECO:0007669"/>
    <property type="project" value="UniProtKB-UniRule"/>
</dbReference>
<dbReference type="Gene3D" id="3.30.1360.80">
    <property type="entry name" value="S-ribosylhomocysteinase (LuxS)"/>
    <property type="match status" value="1"/>
</dbReference>
<dbReference type="HAMAP" id="MF_00091">
    <property type="entry name" value="LuxS"/>
    <property type="match status" value="1"/>
</dbReference>
<dbReference type="InterPro" id="IPR037005">
    <property type="entry name" value="LuxS_sf"/>
</dbReference>
<dbReference type="InterPro" id="IPR011249">
    <property type="entry name" value="Metalloenz_LuxS/M16"/>
</dbReference>
<dbReference type="InterPro" id="IPR003815">
    <property type="entry name" value="S-ribosylhomocysteinase"/>
</dbReference>
<dbReference type="NCBIfam" id="NF002606">
    <property type="entry name" value="PRK02260.2-4"/>
    <property type="match status" value="1"/>
</dbReference>
<dbReference type="NCBIfam" id="NF002611">
    <property type="entry name" value="PRK02260.3-4"/>
    <property type="match status" value="1"/>
</dbReference>
<dbReference type="PANTHER" id="PTHR35799">
    <property type="entry name" value="S-RIBOSYLHOMOCYSTEINE LYASE"/>
    <property type="match status" value="1"/>
</dbReference>
<dbReference type="PANTHER" id="PTHR35799:SF1">
    <property type="entry name" value="S-RIBOSYLHOMOCYSTEINE LYASE"/>
    <property type="match status" value="1"/>
</dbReference>
<dbReference type="Pfam" id="PF02664">
    <property type="entry name" value="LuxS"/>
    <property type="match status" value="1"/>
</dbReference>
<dbReference type="PIRSF" id="PIRSF006160">
    <property type="entry name" value="AI2"/>
    <property type="match status" value="1"/>
</dbReference>
<dbReference type="PRINTS" id="PR01487">
    <property type="entry name" value="LUXSPROTEIN"/>
</dbReference>
<dbReference type="SUPFAM" id="SSF63411">
    <property type="entry name" value="LuxS/MPP-like metallohydrolase"/>
    <property type="match status" value="1"/>
</dbReference>
<organism>
    <name type="scientific">Oenococcus oeni (strain ATCC BAA-331 / PSU-1)</name>
    <dbReference type="NCBI Taxonomy" id="203123"/>
    <lineage>
        <taxon>Bacteria</taxon>
        <taxon>Bacillati</taxon>
        <taxon>Bacillota</taxon>
        <taxon>Bacilli</taxon>
        <taxon>Lactobacillales</taxon>
        <taxon>Lactobacillaceae</taxon>
        <taxon>Oenococcus</taxon>
    </lineage>
</organism>
<sequence length="157" mass="17665">MAEVESFTLDHTKVKAPYVRLIEEQKGPKGGTIANYDLRLAQPNQTSIETGGLHTLEHLFASLMRDRLDGIIDISPFGCRTGFHMISWYTYDTETVAKALKETLTEIRDSIEFSDIPGVSEKTCGNFKDHSLWSAKNWAKVILDEGISSDPFERKVV</sequence>
<keyword id="KW-0071">Autoinducer synthesis</keyword>
<keyword id="KW-0408">Iron</keyword>
<keyword id="KW-0456">Lyase</keyword>
<keyword id="KW-0479">Metal-binding</keyword>
<keyword id="KW-0673">Quorum sensing</keyword>
<keyword id="KW-1185">Reference proteome</keyword>
<name>LUXS_OENOB</name>
<reference key="1">
    <citation type="journal article" date="2006" name="Proc. Natl. Acad. Sci. U.S.A.">
        <title>Comparative genomics of the lactic acid bacteria.</title>
        <authorList>
            <person name="Makarova K.S."/>
            <person name="Slesarev A."/>
            <person name="Wolf Y.I."/>
            <person name="Sorokin A."/>
            <person name="Mirkin B."/>
            <person name="Koonin E.V."/>
            <person name="Pavlov A."/>
            <person name="Pavlova N."/>
            <person name="Karamychev V."/>
            <person name="Polouchine N."/>
            <person name="Shakhova V."/>
            <person name="Grigoriev I."/>
            <person name="Lou Y."/>
            <person name="Rohksar D."/>
            <person name="Lucas S."/>
            <person name="Huang K."/>
            <person name="Goodstein D.M."/>
            <person name="Hawkins T."/>
            <person name="Plengvidhya V."/>
            <person name="Welker D."/>
            <person name="Hughes J."/>
            <person name="Goh Y."/>
            <person name="Benson A."/>
            <person name="Baldwin K."/>
            <person name="Lee J.-H."/>
            <person name="Diaz-Muniz I."/>
            <person name="Dosti B."/>
            <person name="Smeianov V."/>
            <person name="Wechter W."/>
            <person name="Barabote R."/>
            <person name="Lorca G."/>
            <person name="Altermann E."/>
            <person name="Barrangou R."/>
            <person name="Ganesan B."/>
            <person name="Xie Y."/>
            <person name="Rawsthorne H."/>
            <person name="Tamir D."/>
            <person name="Parker C."/>
            <person name="Breidt F."/>
            <person name="Broadbent J.R."/>
            <person name="Hutkins R."/>
            <person name="O'Sullivan D."/>
            <person name="Steele J."/>
            <person name="Unlu G."/>
            <person name="Saier M.H. Jr."/>
            <person name="Klaenhammer T."/>
            <person name="Richardson P."/>
            <person name="Kozyavkin S."/>
            <person name="Weimer B.C."/>
            <person name="Mills D.A."/>
        </authorList>
    </citation>
    <scope>NUCLEOTIDE SEQUENCE [LARGE SCALE GENOMIC DNA]</scope>
    <source>
        <strain>ATCC BAA-331 / PSU-1</strain>
    </source>
</reference>
<comment type="function">
    <text evidence="1">Involved in the synthesis of autoinducer 2 (AI-2) which is secreted by bacteria and is used to communicate both the cell density and the metabolic potential of the environment. The regulation of gene expression in response to changes in cell density is called quorum sensing. Catalyzes the transformation of S-ribosylhomocysteine (RHC) to homocysteine (HC) and 4,5-dihydroxy-2,3-pentadione (DPD).</text>
</comment>
<comment type="catalytic activity">
    <reaction evidence="1">
        <text>S-(5-deoxy-D-ribos-5-yl)-L-homocysteine = (S)-4,5-dihydroxypentane-2,3-dione + L-homocysteine</text>
        <dbReference type="Rhea" id="RHEA:17753"/>
        <dbReference type="ChEBI" id="CHEBI:29484"/>
        <dbReference type="ChEBI" id="CHEBI:58195"/>
        <dbReference type="ChEBI" id="CHEBI:58199"/>
        <dbReference type="EC" id="4.4.1.21"/>
    </reaction>
</comment>
<comment type="cofactor">
    <cofactor evidence="1">
        <name>Fe cation</name>
        <dbReference type="ChEBI" id="CHEBI:24875"/>
    </cofactor>
    <text evidence="1">Binds 1 Fe cation per subunit.</text>
</comment>
<comment type="subunit">
    <text evidence="1">Homodimer.</text>
</comment>
<comment type="similarity">
    <text evidence="1">Belongs to the LuxS family.</text>
</comment>
<protein>
    <recommendedName>
        <fullName evidence="1">S-ribosylhomocysteine lyase</fullName>
        <ecNumber evidence="1">4.4.1.21</ecNumber>
    </recommendedName>
    <alternativeName>
        <fullName evidence="1">AI-2 synthesis protein</fullName>
    </alternativeName>
    <alternativeName>
        <fullName evidence="1">Autoinducer-2 production protein LuxS</fullName>
    </alternativeName>
</protein>
<feature type="chain" id="PRO_0000298017" description="S-ribosylhomocysteine lyase">
    <location>
        <begin position="1"/>
        <end position="157"/>
    </location>
</feature>
<feature type="binding site" evidence="1">
    <location>
        <position position="54"/>
    </location>
    <ligand>
        <name>Fe cation</name>
        <dbReference type="ChEBI" id="CHEBI:24875"/>
    </ligand>
</feature>
<feature type="binding site" evidence="1">
    <location>
        <position position="58"/>
    </location>
    <ligand>
        <name>Fe cation</name>
        <dbReference type="ChEBI" id="CHEBI:24875"/>
    </ligand>
</feature>
<feature type="binding site" evidence="1">
    <location>
        <position position="124"/>
    </location>
    <ligand>
        <name>Fe cation</name>
        <dbReference type="ChEBI" id="CHEBI:24875"/>
    </ligand>
</feature>
<proteinExistence type="inferred from homology"/>
<gene>
    <name evidence="1" type="primary">luxS</name>
    <name type="ordered locus">OEOE_1562</name>
</gene>